<sequence>MHVLVLGSGQLARMMSLAGAPLNIQISAYDVGSGNVVHPLTQQVLGHGLENAIEQVDAITAEFEHIPHDVLDICELSGKFLPSTAAIKAGGDRRVEKALLDNAGVRNAKHYVIETREDFERAIEHVGIPMVLKSALGGYDGKGQWRLKEAAQIETIWAEMAECIAATPTQAIVAEEFVPFNREVSLVGARGKDGSVEVYPLAENVHTNGVLSLSTAIDAPELQAQAKQMFTAVADSLNYVGVLALEFFDVEGTLLVNEIAPRVHNSGHWTQQGAETCQFENHLRAVCGLPLGSTKLIRETSMVNILGEDTLPEALLAMDGCHIHWYGKEKREGRKMGHINVCGDYPGELHRRLCALAEVLDPMIFPAVHEFAKQAQR</sequence>
<gene>
    <name evidence="1" type="primary">purK</name>
    <name type="ordered locus">VP3037</name>
</gene>
<proteinExistence type="inferred from homology"/>
<organism>
    <name type="scientific">Vibrio parahaemolyticus serotype O3:K6 (strain RIMD 2210633)</name>
    <dbReference type="NCBI Taxonomy" id="223926"/>
    <lineage>
        <taxon>Bacteria</taxon>
        <taxon>Pseudomonadati</taxon>
        <taxon>Pseudomonadota</taxon>
        <taxon>Gammaproteobacteria</taxon>
        <taxon>Vibrionales</taxon>
        <taxon>Vibrionaceae</taxon>
        <taxon>Vibrio</taxon>
    </lineage>
</organism>
<keyword id="KW-0067">ATP-binding</keyword>
<keyword id="KW-0436">Ligase</keyword>
<keyword id="KW-0547">Nucleotide-binding</keyword>
<keyword id="KW-0658">Purine biosynthesis</keyword>
<accession>Q87KE0</accession>
<dbReference type="EC" id="6.3.4.18" evidence="1"/>
<dbReference type="EMBL" id="BA000031">
    <property type="protein sequence ID" value="BAC61300.1"/>
    <property type="molecule type" value="Genomic_DNA"/>
</dbReference>
<dbReference type="RefSeq" id="NP_799416.1">
    <property type="nucleotide sequence ID" value="NC_004603.1"/>
</dbReference>
<dbReference type="RefSeq" id="WP_005461432.1">
    <property type="nucleotide sequence ID" value="NC_004603.1"/>
</dbReference>
<dbReference type="SMR" id="Q87KE0"/>
<dbReference type="GeneID" id="1190636"/>
<dbReference type="KEGG" id="vpa:VP3037"/>
<dbReference type="PATRIC" id="fig|223926.6.peg.2921"/>
<dbReference type="eggNOG" id="COG0026">
    <property type="taxonomic scope" value="Bacteria"/>
</dbReference>
<dbReference type="HOGENOM" id="CLU_011534_0_0_6"/>
<dbReference type="UniPathway" id="UPA00074">
    <property type="reaction ID" value="UER00942"/>
</dbReference>
<dbReference type="Proteomes" id="UP000002493">
    <property type="component" value="Chromosome 1"/>
</dbReference>
<dbReference type="GO" id="GO:0005829">
    <property type="term" value="C:cytosol"/>
    <property type="evidence" value="ECO:0007669"/>
    <property type="project" value="TreeGrafter"/>
</dbReference>
<dbReference type="GO" id="GO:0034028">
    <property type="term" value="F:5-(carboxyamino)imidazole ribonucleotide synthase activity"/>
    <property type="evidence" value="ECO:0007669"/>
    <property type="project" value="UniProtKB-UniRule"/>
</dbReference>
<dbReference type="GO" id="GO:0005524">
    <property type="term" value="F:ATP binding"/>
    <property type="evidence" value="ECO:0007669"/>
    <property type="project" value="UniProtKB-KW"/>
</dbReference>
<dbReference type="GO" id="GO:0046872">
    <property type="term" value="F:metal ion binding"/>
    <property type="evidence" value="ECO:0007669"/>
    <property type="project" value="InterPro"/>
</dbReference>
<dbReference type="GO" id="GO:0004638">
    <property type="term" value="F:phosphoribosylaminoimidazole carboxylase activity"/>
    <property type="evidence" value="ECO:0007669"/>
    <property type="project" value="InterPro"/>
</dbReference>
<dbReference type="GO" id="GO:0006189">
    <property type="term" value="P:'de novo' IMP biosynthetic process"/>
    <property type="evidence" value="ECO:0007669"/>
    <property type="project" value="UniProtKB-UniRule"/>
</dbReference>
<dbReference type="FunFam" id="3.30.1490.20:FF:000015">
    <property type="entry name" value="N5-carboxyaminoimidazole ribonucleotide synthase"/>
    <property type="match status" value="1"/>
</dbReference>
<dbReference type="FunFam" id="3.30.470.20:FF:000029">
    <property type="entry name" value="N5-carboxyaminoimidazole ribonucleotide synthase"/>
    <property type="match status" value="1"/>
</dbReference>
<dbReference type="Gene3D" id="3.40.50.20">
    <property type="match status" value="1"/>
</dbReference>
<dbReference type="Gene3D" id="3.30.1490.20">
    <property type="entry name" value="ATP-grasp fold, A domain"/>
    <property type="match status" value="1"/>
</dbReference>
<dbReference type="Gene3D" id="3.30.470.20">
    <property type="entry name" value="ATP-grasp fold, B domain"/>
    <property type="match status" value="1"/>
</dbReference>
<dbReference type="HAMAP" id="MF_01928">
    <property type="entry name" value="PurK"/>
    <property type="match status" value="1"/>
</dbReference>
<dbReference type="InterPro" id="IPR011761">
    <property type="entry name" value="ATP-grasp"/>
</dbReference>
<dbReference type="InterPro" id="IPR003135">
    <property type="entry name" value="ATP-grasp_carboxylate-amine"/>
</dbReference>
<dbReference type="InterPro" id="IPR013815">
    <property type="entry name" value="ATP_grasp_subdomain_1"/>
</dbReference>
<dbReference type="InterPro" id="IPR016185">
    <property type="entry name" value="PreATP-grasp_dom_sf"/>
</dbReference>
<dbReference type="InterPro" id="IPR005875">
    <property type="entry name" value="PurK"/>
</dbReference>
<dbReference type="InterPro" id="IPR040686">
    <property type="entry name" value="PurK_C"/>
</dbReference>
<dbReference type="InterPro" id="IPR054350">
    <property type="entry name" value="PurT/PurK_preATP-grasp"/>
</dbReference>
<dbReference type="InterPro" id="IPR011054">
    <property type="entry name" value="Rudment_hybrid_motif"/>
</dbReference>
<dbReference type="NCBIfam" id="NF004679">
    <property type="entry name" value="PRK06019.1-5"/>
    <property type="match status" value="1"/>
</dbReference>
<dbReference type="NCBIfam" id="TIGR01161">
    <property type="entry name" value="purK"/>
    <property type="match status" value="1"/>
</dbReference>
<dbReference type="PANTHER" id="PTHR11609:SF5">
    <property type="entry name" value="PHOSPHORIBOSYLAMINOIMIDAZOLE CARBOXYLASE"/>
    <property type="match status" value="1"/>
</dbReference>
<dbReference type="PANTHER" id="PTHR11609">
    <property type="entry name" value="PURINE BIOSYNTHESIS PROTEIN 6/7, PUR6/7"/>
    <property type="match status" value="1"/>
</dbReference>
<dbReference type="Pfam" id="PF02222">
    <property type="entry name" value="ATP-grasp"/>
    <property type="match status" value="1"/>
</dbReference>
<dbReference type="Pfam" id="PF17769">
    <property type="entry name" value="PurK_C"/>
    <property type="match status" value="1"/>
</dbReference>
<dbReference type="Pfam" id="PF22660">
    <property type="entry name" value="RS_preATP-grasp-like"/>
    <property type="match status" value="1"/>
</dbReference>
<dbReference type="SUPFAM" id="SSF56059">
    <property type="entry name" value="Glutathione synthetase ATP-binding domain-like"/>
    <property type="match status" value="1"/>
</dbReference>
<dbReference type="SUPFAM" id="SSF52440">
    <property type="entry name" value="PreATP-grasp domain"/>
    <property type="match status" value="1"/>
</dbReference>
<dbReference type="SUPFAM" id="SSF51246">
    <property type="entry name" value="Rudiment single hybrid motif"/>
    <property type="match status" value="1"/>
</dbReference>
<dbReference type="PROSITE" id="PS50975">
    <property type="entry name" value="ATP_GRASP"/>
    <property type="match status" value="1"/>
</dbReference>
<comment type="function">
    <text evidence="1">Catalyzes the ATP-dependent conversion of 5-aminoimidazole ribonucleotide (AIR) and HCO(3)(-) to N5-carboxyaminoimidazole ribonucleotide (N5-CAIR).</text>
</comment>
<comment type="catalytic activity">
    <reaction evidence="1">
        <text>5-amino-1-(5-phospho-beta-D-ribosyl)imidazole + hydrogencarbonate + ATP = 5-carboxyamino-1-(5-phospho-D-ribosyl)imidazole + ADP + phosphate + 2 H(+)</text>
        <dbReference type="Rhea" id="RHEA:19317"/>
        <dbReference type="ChEBI" id="CHEBI:15378"/>
        <dbReference type="ChEBI" id="CHEBI:17544"/>
        <dbReference type="ChEBI" id="CHEBI:30616"/>
        <dbReference type="ChEBI" id="CHEBI:43474"/>
        <dbReference type="ChEBI" id="CHEBI:58730"/>
        <dbReference type="ChEBI" id="CHEBI:137981"/>
        <dbReference type="ChEBI" id="CHEBI:456216"/>
        <dbReference type="EC" id="6.3.4.18"/>
    </reaction>
</comment>
<comment type="pathway">
    <text evidence="1">Purine metabolism; IMP biosynthesis via de novo pathway; 5-amino-1-(5-phospho-D-ribosyl)imidazole-4-carboxylate from 5-amino-1-(5-phospho-D-ribosyl)imidazole (N5-CAIR route): step 1/2.</text>
</comment>
<comment type="subunit">
    <text evidence="1">Homodimer.</text>
</comment>
<comment type="similarity">
    <text evidence="1">Belongs to the PurK/PurT family.</text>
</comment>
<name>PURK_VIBPA</name>
<protein>
    <recommendedName>
        <fullName evidence="1">N5-carboxyaminoimidazole ribonucleotide synthase</fullName>
        <shortName evidence="1">N5-CAIR synthase</shortName>
        <ecNumber evidence="1">6.3.4.18</ecNumber>
    </recommendedName>
    <alternativeName>
        <fullName evidence="1">5-(carboxyamino)imidazole ribonucleotide synthetase</fullName>
    </alternativeName>
</protein>
<reference key="1">
    <citation type="journal article" date="2003" name="Lancet">
        <title>Genome sequence of Vibrio parahaemolyticus: a pathogenic mechanism distinct from that of V. cholerae.</title>
        <authorList>
            <person name="Makino K."/>
            <person name="Oshima K."/>
            <person name="Kurokawa K."/>
            <person name="Yokoyama K."/>
            <person name="Uda T."/>
            <person name="Tagomori K."/>
            <person name="Iijima Y."/>
            <person name="Najima M."/>
            <person name="Nakano M."/>
            <person name="Yamashita A."/>
            <person name="Kubota Y."/>
            <person name="Kimura S."/>
            <person name="Yasunaga T."/>
            <person name="Honda T."/>
            <person name="Shinagawa H."/>
            <person name="Hattori M."/>
            <person name="Iida T."/>
        </authorList>
    </citation>
    <scope>NUCLEOTIDE SEQUENCE [LARGE SCALE GENOMIC DNA]</scope>
    <source>
        <strain>RIMD 2210633</strain>
    </source>
</reference>
<evidence type="ECO:0000255" key="1">
    <source>
        <dbReference type="HAMAP-Rule" id="MF_01928"/>
    </source>
</evidence>
<feature type="chain" id="PRO_0000075017" description="N5-carboxyaminoimidazole ribonucleotide synthase">
    <location>
        <begin position="1"/>
        <end position="377"/>
    </location>
</feature>
<feature type="domain" description="ATP-grasp" evidence="1">
    <location>
        <begin position="97"/>
        <end position="287"/>
    </location>
</feature>
<feature type="binding site" evidence="1">
    <location>
        <position position="93"/>
    </location>
    <ligand>
        <name>ATP</name>
        <dbReference type="ChEBI" id="CHEBI:30616"/>
    </ligand>
</feature>
<feature type="binding site" evidence="1">
    <location>
        <position position="133"/>
    </location>
    <ligand>
        <name>ATP</name>
        <dbReference type="ChEBI" id="CHEBI:30616"/>
    </ligand>
</feature>
<feature type="binding site" evidence="1">
    <location>
        <begin position="138"/>
        <end position="144"/>
    </location>
    <ligand>
        <name>ATP</name>
        <dbReference type="ChEBI" id="CHEBI:30616"/>
    </ligand>
</feature>
<feature type="binding site" evidence="1">
    <location>
        <begin position="175"/>
        <end position="178"/>
    </location>
    <ligand>
        <name>ATP</name>
        <dbReference type="ChEBI" id="CHEBI:30616"/>
    </ligand>
</feature>
<feature type="binding site" evidence="1">
    <location>
        <position position="183"/>
    </location>
    <ligand>
        <name>ATP</name>
        <dbReference type="ChEBI" id="CHEBI:30616"/>
    </ligand>
</feature>
<feature type="binding site" evidence="1">
    <location>
        <position position="206"/>
    </location>
    <ligand>
        <name>ATP</name>
        <dbReference type="ChEBI" id="CHEBI:30616"/>
    </ligand>
</feature>
<feature type="binding site" evidence="1">
    <location>
        <begin position="257"/>
        <end position="258"/>
    </location>
    <ligand>
        <name>ATP</name>
        <dbReference type="ChEBI" id="CHEBI:30616"/>
    </ligand>
</feature>